<sequence>MQKFTTFTSIAIPLKRANIDTDAIIPKQFLKSIKRSGFGANLFDEWRYLDHGEIGMDNSKRPLNMDFVLNQPKYQNAKILLVLKNFGCGSSREHAPWALKDYGFKTIIAPSFADIFYNNCFKNGILPIVQNNNVMDELFSSTDKITINLDAQSININNKNYPFEIDIERKTHLINGLDDISLTLQYINDIKAFEKHYFNKYDWL</sequence>
<reference key="1">
    <citation type="journal article" date="2007" name="Curr. Biol.">
        <title>Reduced genome of the thioautotrophic intracellular symbiont in a deep-sea clam, Calyptogena okutanii.</title>
        <authorList>
            <person name="Kuwahara H."/>
            <person name="Yoshida T."/>
            <person name="Takaki Y."/>
            <person name="Shimamura S."/>
            <person name="Nishi S."/>
            <person name="Harada M."/>
            <person name="Matsuyama K."/>
            <person name="Takishita K."/>
            <person name="Kawato M."/>
            <person name="Uematsu K."/>
            <person name="Fujiwara Y."/>
            <person name="Sato T."/>
            <person name="Kato C."/>
            <person name="Kitagawa M."/>
            <person name="Kato I."/>
            <person name="Maruyama T."/>
        </authorList>
    </citation>
    <scope>NUCLEOTIDE SEQUENCE [LARGE SCALE GENOMIC DNA]</scope>
    <source>
        <strain>HA</strain>
    </source>
</reference>
<feature type="chain" id="PRO_1000063855" description="3-isopropylmalate dehydratase small subunit">
    <location>
        <begin position="1"/>
        <end position="204"/>
    </location>
</feature>
<evidence type="ECO:0000255" key="1">
    <source>
        <dbReference type="HAMAP-Rule" id="MF_01031"/>
    </source>
</evidence>
<proteinExistence type="inferred from homology"/>
<organism>
    <name type="scientific">Vesicomyosocius okutanii subsp. Calyptogena okutanii (strain HA)</name>
    <dbReference type="NCBI Taxonomy" id="412965"/>
    <lineage>
        <taxon>Bacteria</taxon>
        <taxon>Pseudomonadati</taxon>
        <taxon>Pseudomonadota</taxon>
        <taxon>Gammaproteobacteria</taxon>
        <taxon>Candidatus Pseudothioglobaceae</taxon>
        <taxon>Candidatus Vesicomyosocius</taxon>
    </lineage>
</organism>
<protein>
    <recommendedName>
        <fullName evidence="1">3-isopropylmalate dehydratase small subunit</fullName>
        <ecNumber evidence="1">4.2.1.33</ecNumber>
    </recommendedName>
    <alternativeName>
        <fullName evidence="1">Alpha-IPM isomerase</fullName>
        <shortName evidence="1">IPMI</shortName>
    </alternativeName>
    <alternativeName>
        <fullName evidence="1">Isopropylmalate isomerase</fullName>
    </alternativeName>
</protein>
<comment type="function">
    <text evidence="1">Catalyzes the isomerization between 2-isopropylmalate and 3-isopropylmalate, via the formation of 2-isopropylmaleate.</text>
</comment>
<comment type="catalytic activity">
    <reaction evidence="1">
        <text>(2R,3S)-3-isopropylmalate = (2S)-2-isopropylmalate</text>
        <dbReference type="Rhea" id="RHEA:32287"/>
        <dbReference type="ChEBI" id="CHEBI:1178"/>
        <dbReference type="ChEBI" id="CHEBI:35121"/>
        <dbReference type="EC" id="4.2.1.33"/>
    </reaction>
</comment>
<comment type="pathway">
    <text evidence="1">Amino-acid biosynthesis; L-leucine biosynthesis; L-leucine from 3-methyl-2-oxobutanoate: step 2/4.</text>
</comment>
<comment type="subunit">
    <text evidence="1">Heterodimer of LeuC and LeuD.</text>
</comment>
<comment type="similarity">
    <text evidence="1">Belongs to the LeuD family. LeuD type 1 subfamily.</text>
</comment>
<name>LEUD_VESOH</name>
<gene>
    <name evidence="1" type="primary">leuD</name>
    <name type="ordered locus">COSY_0349</name>
</gene>
<keyword id="KW-0028">Amino-acid biosynthesis</keyword>
<keyword id="KW-0100">Branched-chain amino acid biosynthesis</keyword>
<keyword id="KW-0432">Leucine biosynthesis</keyword>
<keyword id="KW-0456">Lyase</keyword>
<keyword id="KW-1185">Reference proteome</keyword>
<dbReference type="EC" id="4.2.1.33" evidence="1"/>
<dbReference type="EMBL" id="AP009247">
    <property type="protein sequence ID" value="BAF61474.1"/>
    <property type="molecule type" value="Genomic_DNA"/>
</dbReference>
<dbReference type="RefSeq" id="WP_011929744.1">
    <property type="nucleotide sequence ID" value="NC_009465.1"/>
</dbReference>
<dbReference type="SMR" id="A5CX59"/>
<dbReference type="STRING" id="412965.COSY_0349"/>
<dbReference type="KEGG" id="vok:COSY_0349"/>
<dbReference type="eggNOG" id="COG0066">
    <property type="taxonomic scope" value="Bacteria"/>
</dbReference>
<dbReference type="HOGENOM" id="CLU_081378_0_3_6"/>
<dbReference type="OrthoDB" id="9777465at2"/>
<dbReference type="UniPathway" id="UPA00048">
    <property type="reaction ID" value="UER00071"/>
</dbReference>
<dbReference type="Proteomes" id="UP000000247">
    <property type="component" value="Chromosome"/>
</dbReference>
<dbReference type="GO" id="GO:0009316">
    <property type="term" value="C:3-isopropylmalate dehydratase complex"/>
    <property type="evidence" value="ECO:0007669"/>
    <property type="project" value="InterPro"/>
</dbReference>
<dbReference type="GO" id="GO:0003861">
    <property type="term" value="F:3-isopropylmalate dehydratase activity"/>
    <property type="evidence" value="ECO:0007669"/>
    <property type="project" value="UniProtKB-UniRule"/>
</dbReference>
<dbReference type="GO" id="GO:0009098">
    <property type="term" value="P:L-leucine biosynthetic process"/>
    <property type="evidence" value="ECO:0007669"/>
    <property type="project" value="UniProtKB-UniRule"/>
</dbReference>
<dbReference type="CDD" id="cd01577">
    <property type="entry name" value="IPMI_Swivel"/>
    <property type="match status" value="1"/>
</dbReference>
<dbReference type="FunFam" id="3.20.19.10:FF:000003">
    <property type="entry name" value="3-isopropylmalate dehydratase small subunit"/>
    <property type="match status" value="1"/>
</dbReference>
<dbReference type="Gene3D" id="3.20.19.10">
    <property type="entry name" value="Aconitase, domain 4"/>
    <property type="match status" value="1"/>
</dbReference>
<dbReference type="HAMAP" id="MF_01031">
    <property type="entry name" value="LeuD_type1"/>
    <property type="match status" value="1"/>
</dbReference>
<dbReference type="InterPro" id="IPR004431">
    <property type="entry name" value="3-IsopropMal_deHydase_ssu"/>
</dbReference>
<dbReference type="InterPro" id="IPR015928">
    <property type="entry name" value="Aconitase/3IPM_dehydase_swvl"/>
</dbReference>
<dbReference type="InterPro" id="IPR000573">
    <property type="entry name" value="AconitaseA/IPMdHydase_ssu_swvl"/>
</dbReference>
<dbReference type="InterPro" id="IPR033940">
    <property type="entry name" value="IPMI_Swivel"/>
</dbReference>
<dbReference type="InterPro" id="IPR050075">
    <property type="entry name" value="LeuD"/>
</dbReference>
<dbReference type="NCBIfam" id="TIGR00171">
    <property type="entry name" value="leuD"/>
    <property type="match status" value="1"/>
</dbReference>
<dbReference type="NCBIfam" id="NF002458">
    <property type="entry name" value="PRK01641.1"/>
    <property type="match status" value="1"/>
</dbReference>
<dbReference type="PANTHER" id="PTHR43345:SF5">
    <property type="entry name" value="3-ISOPROPYLMALATE DEHYDRATASE SMALL SUBUNIT"/>
    <property type="match status" value="1"/>
</dbReference>
<dbReference type="PANTHER" id="PTHR43345">
    <property type="entry name" value="3-ISOPROPYLMALATE DEHYDRATASE SMALL SUBUNIT 2-RELATED-RELATED"/>
    <property type="match status" value="1"/>
</dbReference>
<dbReference type="Pfam" id="PF00694">
    <property type="entry name" value="Aconitase_C"/>
    <property type="match status" value="1"/>
</dbReference>
<dbReference type="SUPFAM" id="SSF52016">
    <property type="entry name" value="LeuD/IlvD-like"/>
    <property type="match status" value="1"/>
</dbReference>
<accession>A5CX59</accession>